<organismHost>
    <name type="scientific">Homo sapiens</name>
    <name type="common">Human</name>
    <dbReference type="NCBI Taxonomy" id="9606"/>
</organismHost>
<sequence>MALRRTSDSKVYLPPTPVSRVVRRMNMYTHRIYYYAGSSRLLTLGHPYFPIPKSGSTAEIPKVSAYQYRVFRVHLPDPNKFGLPDPQLYNPETERLVWACVGVEVGRGQPLGVGLSGHPLFNKLDDTENSHLATANADTDNRDNVCVDNKQTQLCIIGCTPPLGEHWGVGTVCKNAQSQVQRGDCPPLELISSVIEDGDMIDTGFGAMDFTALQATKCDVPLDINQSICKYPDYLKMSADTYGNSMFFFLRREQLFARHFFNKAGTIGDSVPVSMYIKGAGQGREPPTTSIYSRTPSGSMVTSDAQLFNKPYWLQRAQGHNNGICWGNQLFVTCVDTTRSTNLTISTVSAQSASATFKPSDYKQFIRHGEEYELQFIFQLCKITLTTDVMAYIHTMNSTILENWNFGLTLPPTASLEDAYRFIKNSATTCQRDAPAQPKEDPFSKLKFWDVDLKEKFSIDLDQFPLGRKFMLQAGIQRRPKLGTKRPASSLSASSSSTTRKKRKLTK</sequence>
<dbReference type="EMBL" id="AB027020">
    <property type="protein sequence ID" value="BAA90734.1"/>
    <property type="molecule type" value="Genomic_DNA"/>
</dbReference>
<dbReference type="EMBL" id="U12497">
    <property type="protein sequence ID" value="AAA67241.1"/>
    <property type="molecule type" value="Genomic_DNA"/>
</dbReference>
<dbReference type="SMR" id="P50826"/>
<dbReference type="Proteomes" id="UP000007674">
    <property type="component" value="Genome"/>
</dbReference>
<dbReference type="GO" id="GO:0042025">
    <property type="term" value="C:host cell nucleus"/>
    <property type="evidence" value="ECO:0007669"/>
    <property type="project" value="UniProtKB-SubCell"/>
</dbReference>
<dbReference type="GO" id="GO:0039620">
    <property type="term" value="C:T=7 icosahedral viral capsid"/>
    <property type="evidence" value="ECO:0007669"/>
    <property type="project" value="UniProtKB-UniRule"/>
</dbReference>
<dbReference type="GO" id="GO:0005198">
    <property type="term" value="F:structural molecule activity"/>
    <property type="evidence" value="ECO:0007669"/>
    <property type="project" value="UniProtKB-UniRule"/>
</dbReference>
<dbReference type="GO" id="GO:0075509">
    <property type="term" value="P:endocytosis involved in viral entry into host cell"/>
    <property type="evidence" value="ECO:0007669"/>
    <property type="project" value="UniProtKB-KW"/>
</dbReference>
<dbReference type="GO" id="GO:0019062">
    <property type="term" value="P:virion attachment to host cell"/>
    <property type="evidence" value="ECO:0007669"/>
    <property type="project" value="UniProtKB-UniRule"/>
</dbReference>
<dbReference type="Gene3D" id="2.60.175.20">
    <property type="entry name" value="Major capsid L1 (late) superfamily, Papillomavirus"/>
    <property type="match status" value="2"/>
</dbReference>
<dbReference type="HAMAP" id="MF_04002">
    <property type="entry name" value="PPV_L1"/>
    <property type="match status" value="1"/>
</dbReference>
<dbReference type="InterPro" id="IPR002210">
    <property type="entry name" value="Capsid_L1_Papillomavir"/>
</dbReference>
<dbReference type="InterPro" id="IPR036973">
    <property type="entry name" value="Capsid_L1_sf_Papillomavir"/>
</dbReference>
<dbReference type="InterPro" id="IPR011222">
    <property type="entry name" value="dsDNA_vir_gr_I_capsid"/>
</dbReference>
<dbReference type="Pfam" id="PF00500">
    <property type="entry name" value="Late_protein_L1"/>
    <property type="match status" value="1"/>
</dbReference>
<dbReference type="PRINTS" id="PR00865">
    <property type="entry name" value="HPVCAPSIDL1"/>
</dbReference>
<dbReference type="SUPFAM" id="SSF88648">
    <property type="entry name" value="Group I dsDNA viruses"/>
    <property type="match status" value="1"/>
</dbReference>
<gene>
    <name evidence="1" type="primary">L1</name>
</gene>
<organism>
    <name type="scientific">Human papillomavirus 69</name>
    <dbReference type="NCBI Taxonomy" id="37121"/>
    <lineage>
        <taxon>Viruses</taxon>
        <taxon>Monodnaviria</taxon>
        <taxon>Shotokuvirae</taxon>
        <taxon>Cossaviricota</taxon>
        <taxon>Papovaviricetes</taxon>
        <taxon>Zurhausenvirales</taxon>
        <taxon>Papillomaviridae</taxon>
        <taxon>Firstpapillomavirinae</taxon>
        <taxon>Alphapapillomavirus</taxon>
        <taxon>Alphapapillomavirus 5</taxon>
    </lineage>
</organism>
<accession>P50826</accession>
<accession>Q9JH44</accession>
<evidence type="ECO:0000255" key="1">
    <source>
        <dbReference type="HAMAP-Rule" id="MF_04002"/>
    </source>
</evidence>
<evidence type="ECO:0000256" key="2">
    <source>
        <dbReference type="SAM" id="MobiDB-lite"/>
    </source>
</evidence>
<evidence type="ECO:0000305" key="3"/>
<protein>
    <recommendedName>
        <fullName evidence="1">Major capsid protein L1</fullName>
    </recommendedName>
</protein>
<name>VL1_HPV69</name>
<feature type="chain" id="PRO_0000133551" description="Major capsid protein L1">
    <location>
        <begin position="1"/>
        <end position="507"/>
    </location>
</feature>
<feature type="region of interest" description="Disordered" evidence="2">
    <location>
        <begin position="477"/>
        <end position="507"/>
    </location>
</feature>
<feature type="compositionally biased region" description="Low complexity" evidence="2">
    <location>
        <begin position="488"/>
        <end position="498"/>
    </location>
</feature>
<feature type="disulfide bond" description="Interchain (with C-430)" evidence="1">
    <location>
        <position position="173"/>
    </location>
</feature>
<feature type="disulfide bond" description="Interchain (with C-173)" evidence="1">
    <location>
        <position position="430"/>
    </location>
</feature>
<feature type="sequence conflict" description="In Ref. 2; AAA67241." evidence="3" ref="2">
    <original>T</original>
    <variation>A</variation>
    <location>
        <position position="399"/>
    </location>
</feature>
<feature type="sequence conflict" description="In Ref. 2; AAA67241." evidence="3" ref="2">
    <original>F</original>
    <variation>Y</variation>
    <location>
        <position position="464"/>
    </location>
</feature>
<keyword id="KW-0167">Capsid protein</keyword>
<keyword id="KW-1015">Disulfide bond</keyword>
<keyword id="KW-1048">Host nucleus</keyword>
<keyword id="KW-0945">Host-virus interaction</keyword>
<keyword id="KW-0426">Late protein</keyword>
<keyword id="KW-1145">T=7 icosahedral capsid protein</keyword>
<keyword id="KW-1161">Viral attachment to host cell</keyword>
<keyword id="KW-1162">Viral penetration into host cytoplasm</keyword>
<keyword id="KW-0946">Virion</keyword>
<keyword id="KW-1164">Virus endocytosis by host</keyword>
<keyword id="KW-1160">Virus entry into host cell</keyword>
<comment type="function">
    <text evidence="1">Forms an icosahedral capsid with a T=7 symmetry and a 50 nm diameter. The capsid is composed of 72 pentamers linked to each other by disulfide bonds and associated with L2 proteins. Binds to heparan sulfate proteoglycans on cell surface of basal layer keratinocytes to provide initial virion attachment. This binding mediates a conformational change in the virus capsid that facilitates efficient infection. The virion enters the host cell via endocytosis. During virus trafficking, L1 protein dissociates from the viral DNA and the genomic DNA is released to the host nucleus. The virion assembly takes place within the cell nucleus. Encapsulates the genomic DNA together with protein L2.</text>
</comment>
<comment type="subunit">
    <text evidence="1">Self-assembles into homopentamers. The capsid has an icosahedral symmetry and consists of 72 capsomers, with each capsomer being a pentamer of L1. Interacts with the minor capsid protein L2; this interaction is necessary for viral genome encapsidation. Interacts with protein E2; this interaction enhances E2-dependent replication and transcription activation.</text>
</comment>
<comment type="subcellular location">
    <subcellularLocation>
        <location evidence="1">Virion</location>
    </subcellularLocation>
    <subcellularLocation>
        <location evidence="1">Host nucleus</location>
    </subcellularLocation>
</comment>
<comment type="similarity">
    <text evidence="1">Belongs to the papillomaviridae L1 protein family.</text>
</comment>
<reference key="1">
    <citation type="journal article" date="2000" name="Clin. Diagn. Lab. Immunol.">
        <title>Molecular cloning and nucleotide sequence analysis of a novel human papillomavirus (type 82) associated with vaginal intraepithelial neoplasia.</title>
        <authorList>
            <person name="Kino N."/>
            <person name="Sata T."/>
            <person name="Sato Y."/>
            <person name="Sugase M."/>
            <person name="Matsukura T."/>
        </authorList>
    </citation>
    <scope>NUCLEOTIDE SEQUENCE [GENOMIC DNA]</scope>
</reference>
<reference key="2">
    <citation type="journal article" date="1994" name="J. Infect. Dis.">
        <title>Identification and assessment of known and novel human papillomaviruses by polymerase chain reaction amplification, restriction fragment length polymorphisms, nucleotide sequence, and phylogenetic algorithms.</title>
        <authorList>
            <person name="Bernard H.U."/>
            <person name="Chan S.-Y."/>
            <person name="Manos M.M."/>
            <person name="Ong C.K."/>
            <person name="Villa L.L."/>
            <person name="Delius H."/>
            <person name="Peyton C.L."/>
            <person name="Bauer H.M."/>
            <person name="Wheeler C.M."/>
        </authorList>
    </citation>
    <scope>NUCLEOTIDE SEQUENCE [GENOMIC DNA] OF 317-468</scope>
</reference>
<proteinExistence type="inferred from homology"/>